<organism>
    <name type="scientific">Escherichia coli O139:H28 (strain E24377A / ETEC)</name>
    <dbReference type="NCBI Taxonomy" id="331111"/>
    <lineage>
        <taxon>Bacteria</taxon>
        <taxon>Pseudomonadati</taxon>
        <taxon>Pseudomonadota</taxon>
        <taxon>Gammaproteobacteria</taxon>
        <taxon>Enterobacterales</taxon>
        <taxon>Enterobacteriaceae</taxon>
        <taxon>Escherichia</taxon>
    </lineage>
</organism>
<dbReference type="EC" id="3.6.1.-" evidence="1"/>
<dbReference type="EMBL" id="CP000800">
    <property type="protein sequence ID" value="ABV17724.1"/>
    <property type="molecule type" value="Genomic_DNA"/>
</dbReference>
<dbReference type="RefSeq" id="WP_000193711.1">
    <property type="nucleotide sequence ID" value="NC_009801.1"/>
</dbReference>
<dbReference type="SMR" id="A7ZPR0"/>
<dbReference type="GeneID" id="75204261"/>
<dbReference type="KEGG" id="ecw:EcE24377A_2746"/>
<dbReference type="HOGENOM" id="CLU_062658_6_0_6"/>
<dbReference type="Proteomes" id="UP000001122">
    <property type="component" value="Chromosome"/>
</dbReference>
<dbReference type="GO" id="GO:0005829">
    <property type="term" value="C:cytosol"/>
    <property type="evidence" value="ECO:0007669"/>
    <property type="project" value="TreeGrafter"/>
</dbReference>
<dbReference type="GO" id="GO:0016818">
    <property type="term" value="F:hydrolase activity, acting on acid anhydrides, in phosphorus-containing anhydrides"/>
    <property type="evidence" value="ECO:0007669"/>
    <property type="project" value="InterPro"/>
</dbReference>
<dbReference type="GO" id="GO:0046872">
    <property type="term" value="F:metal ion binding"/>
    <property type="evidence" value="ECO:0007669"/>
    <property type="project" value="UniProtKB-KW"/>
</dbReference>
<dbReference type="GO" id="GO:0006753">
    <property type="term" value="P:nucleoside phosphate metabolic process"/>
    <property type="evidence" value="ECO:0007669"/>
    <property type="project" value="TreeGrafter"/>
</dbReference>
<dbReference type="GO" id="GO:0019693">
    <property type="term" value="P:ribose phosphate metabolic process"/>
    <property type="evidence" value="ECO:0007669"/>
    <property type="project" value="TreeGrafter"/>
</dbReference>
<dbReference type="CDD" id="cd24157">
    <property type="entry name" value="NUDIX_GDPMK"/>
    <property type="match status" value="1"/>
</dbReference>
<dbReference type="FunFam" id="3.90.79.10:FF:000010">
    <property type="entry name" value="GDP-mannose pyrophosphatase NudK"/>
    <property type="match status" value="1"/>
</dbReference>
<dbReference type="Gene3D" id="3.90.79.10">
    <property type="entry name" value="Nucleoside Triphosphate Pyrophosphohydrolase"/>
    <property type="match status" value="1"/>
</dbReference>
<dbReference type="InterPro" id="IPR004385">
    <property type="entry name" value="NDP_pyrophosphatase"/>
</dbReference>
<dbReference type="InterPro" id="IPR015797">
    <property type="entry name" value="NUDIX_hydrolase-like_dom_sf"/>
</dbReference>
<dbReference type="InterPro" id="IPR000086">
    <property type="entry name" value="NUDIX_hydrolase_dom"/>
</dbReference>
<dbReference type="NCBIfam" id="TIGR00052">
    <property type="entry name" value="nudix-type nucleoside diphosphatase, YffH/AdpP family"/>
    <property type="match status" value="1"/>
</dbReference>
<dbReference type="NCBIfam" id="NF011585">
    <property type="entry name" value="PRK15009.1"/>
    <property type="match status" value="1"/>
</dbReference>
<dbReference type="PANTHER" id="PTHR11839:SF18">
    <property type="entry name" value="NUDIX HYDROLASE DOMAIN-CONTAINING PROTEIN"/>
    <property type="match status" value="1"/>
</dbReference>
<dbReference type="PANTHER" id="PTHR11839">
    <property type="entry name" value="UDP/ADP-SUGAR PYROPHOSPHATASE"/>
    <property type="match status" value="1"/>
</dbReference>
<dbReference type="Pfam" id="PF00293">
    <property type="entry name" value="NUDIX"/>
    <property type="match status" value="1"/>
</dbReference>
<dbReference type="SUPFAM" id="SSF55811">
    <property type="entry name" value="Nudix"/>
    <property type="match status" value="1"/>
</dbReference>
<dbReference type="PROSITE" id="PS51462">
    <property type="entry name" value="NUDIX"/>
    <property type="match status" value="1"/>
</dbReference>
<evidence type="ECO:0000250" key="1">
    <source>
        <dbReference type="UniProtKB" id="P37128"/>
    </source>
</evidence>
<evidence type="ECO:0000255" key="2">
    <source>
        <dbReference type="PROSITE-ProRule" id="PRU00794"/>
    </source>
</evidence>
<evidence type="ECO:0000305" key="3"/>
<sequence length="191" mass="21733">MTQQITLIKDKILSDNYFTLHNITYDLTRKDGEVIRHKREVYDRGNGATILLYNAKKKTVVLIRQFRVATWVNGNESGQLIETCAGLLDNDEPEVCIRKEAIEETGYEVGEVRKLFELYMSPGGVTELIHFFIAEYSDNQRANAGGGVEDEDIEVLELPFSQALEMIKTGEIRDGKTVLLLNYLQTSHLMD</sequence>
<name>NUDK_ECO24</name>
<keyword id="KW-0378">Hydrolase</keyword>
<keyword id="KW-0460">Magnesium</keyword>
<keyword id="KW-0479">Metal-binding</keyword>
<keyword id="KW-1185">Reference proteome</keyword>
<accession>A7ZPR0</accession>
<comment type="function">
    <text evidence="1">Nucleoside diphosphate sugar hydrolase that hydrolyzes GDP-mannose as its preferred substrate, yielding GMP and mannose-1-phosphate.</text>
</comment>
<comment type="catalytic activity">
    <reaction evidence="1">
        <text>GDP-alpha-D-mannose + H2O = alpha-D-mannose 1-phosphate + GMP + 2 H(+)</text>
        <dbReference type="Rhea" id="RHEA:27978"/>
        <dbReference type="ChEBI" id="CHEBI:15377"/>
        <dbReference type="ChEBI" id="CHEBI:15378"/>
        <dbReference type="ChEBI" id="CHEBI:57527"/>
        <dbReference type="ChEBI" id="CHEBI:58115"/>
        <dbReference type="ChEBI" id="CHEBI:58409"/>
    </reaction>
</comment>
<comment type="cofactor">
    <cofactor evidence="1">
        <name>Mg(2+)</name>
        <dbReference type="ChEBI" id="CHEBI:18420"/>
    </cofactor>
</comment>
<comment type="subunit">
    <text evidence="1">Homodimer.</text>
</comment>
<comment type="domain">
    <text evidence="1">In the dimer, the N-terminal domains are swapped between the two monomers, such that residues of both chains contribute to the active site.</text>
</comment>
<comment type="similarity">
    <text evidence="3">Belongs to the Nudix hydrolase family. NudK subfamily.</text>
</comment>
<reference key="1">
    <citation type="journal article" date="2008" name="J. Bacteriol.">
        <title>The pangenome structure of Escherichia coli: comparative genomic analysis of E. coli commensal and pathogenic isolates.</title>
        <authorList>
            <person name="Rasko D.A."/>
            <person name="Rosovitz M.J."/>
            <person name="Myers G.S.A."/>
            <person name="Mongodin E.F."/>
            <person name="Fricke W.F."/>
            <person name="Gajer P."/>
            <person name="Crabtree J."/>
            <person name="Sebaihia M."/>
            <person name="Thomson N.R."/>
            <person name="Chaudhuri R."/>
            <person name="Henderson I.R."/>
            <person name="Sperandio V."/>
            <person name="Ravel J."/>
        </authorList>
    </citation>
    <scope>NUCLEOTIDE SEQUENCE [LARGE SCALE GENOMIC DNA]</scope>
    <source>
        <strain>E24377A / ETEC</strain>
    </source>
</reference>
<gene>
    <name type="primary">nudK</name>
    <name type="ordered locus">EcE24377A_2746</name>
</gene>
<proteinExistence type="inferred from homology"/>
<feature type="chain" id="PRO_0000342486" description="GDP-mannose pyrophosphatase">
    <location>
        <begin position="1"/>
        <end position="191"/>
    </location>
</feature>
<feature type="domain" description="Nudix hydrolase" evidence="2">
    <location>
        <begin position="43"/>
        <end position="180"/>
    </location>
</feature>
<feature type="short sequence motif" description="Nudix box">
    <location>
        <begin position="86"/>
        <end position="106"/>
    </location>
</feature>
<feature type="binding site" description="in other chain" evidence="1">
    <location>
        <position position="17"/>
    </location>
    <ligand>
        <name>GDP-alpha-D-mannose</name>
        <dbReference type="ChEBI" id="CHEBI:57527"/>
        <note>ligand shared between dimeric partners</note>
    </ligand>
</feature>
<feature type="binding site" evidence="1">
    <location>
        <begin position="38"/>
        <end position="40"/>
    </location>
    <ligand>
        <name>GDP-alpha-D-mannose</name>
        <dbReference type="ChEBI" id="CHEBI:57527"/>
        <note>ligand shared between dimeric partners</note>
    </ligand>
</feature>
<feature type="binding site" description="in other chain" evidence="1">
    <location>
        <position position="67"/>
    </location>
    <ligand>
        <name>GDP-alpha-D-mannose</name>
        <dbReference type="ChEBI" id="CHEBI:57527"/>
        <note>ligand shared between dimeric partners</note>
    </ligand>
</feature>
<feature type="binding site" description="in other chain" evidence="1">
    <location>
        <begin position="85"/>
        <end position="87"/>
    </location>
    <ligand>
        <name>GDP-alpha-D-mannose</name>
        <dbReference type="ChEBI" id="CHEBI:57527"/>
        <note>ligand shared between dimeric partners</note>
    </ligand>
</feature>
<feature type="binding site" evidence="1">
    <location>
        <position position="85"/>
    </location>
    <ligand>
        <name>Mg(2+)</name>
        <dbReference type="ChEBI" id="CHEBI:18420"/>
        <label>1</label>
    </ligand>
</feature>
<feature type="binding site" evidence="1">
    <location>
        <position position="100"/>
    </location>
    <ligand>
        <name>Mg(2+)</name>
        <dbReference type="ChEBI" id="CHEBI:18420"/>
        <label>2</label>
    </ligand>
</feature>
<feature type="binding site" description="in other chain" evidence="1">
    <location>
        <position position="104"/>
    </location>
    <ligand>
        <name>GDP-alpha-D-mannose</name>
        <dbReference type="ChEBI" id="CHEBI:57527"/>
        <note>ligand shared between dimeric partners</note>
    </ligand>
</feature>
<feature type="binding site" evidence="1">
    <location>
        <position position="104"/>
    </location>
    <ligand>
        <name>Mg(2+)</name>
        <dbReference type="ChEBI" id="CHEBI:18420"/>
        <label>1</label>
    </ligand>
</feature>
<feature type="binding site" evidence="1">
    <location>
        <position position="104"/>
    </location>
    <ligand>
        <name>Mg(2+)</name>
        <dbReference type="ChEBI" id="CHEBI:18420"/>
        <label>2</label>
    </ligand>
</feature>
<feature type="binding site" description="in other chain" evidence="1">
    <location>
        <position position="127"/>
    </location>
    <ligand>
        <name>GDP-alpha-D-mannose</name>
        <dbReference type="ChEBI" id="CHEBI:57527"/>
        <note>ligand shared between dimeric partners</note>
    </ligand>
</feature>
<feature type="binding site" description="in other chain" evidence="1">
    <location>
        <begin position="150"/>
        <end position="151"/>
    </location>
    <ligand>
        <name>GDP-alpha-D-mannose</name>
        <dbReference type="ChEBI" id="CHEBI:57527"/>
        <note>ligand shared between dimeric partners</note>
    </ligand>
</feature>
<feature type="binding site" evidence="1">
    <location>
        <position position="151"/>
    </location>
    <ligand>
        <name>Mg(2+)</name>
        <dbReference type="ChEBI" id="CHEBI:18420"/>
        <label>2</label>
    </ligand>
</feature>
<feature type="binding site" description="in other chain" evidence="1">
    <location>
        <position position="176"/>
    </location>
    <ligand>
        <name>GDP-alpha-D-mannose</name>
        <dbReference type="ChEBI" id="CHEBI:57527"/>
        <note>ligand shared between dimeric partners</note>
    </ligand>
</feature>
<protein>
    <recommendedName>
        <fullName>GDP-mannose pyrophosphatase</fullName>
        <ecNumber evidence="1">3.6.1.-</ecNumber>
    </recommendedName>
    <alternativeName>
        <fullName>GDP-mannose hydrolase</fullName>
    </alternativeName>
    <alternativeName>
        <fullName>GDPMK</fullName>
    </alternativeName>
</protein>